<dbReference type="EMBL" id="AE009950">
    <property type="protein sequence ID" value="AAL80649.1"/>
    <property type="molecule type" value="Genomic_DNA"/>
</dbReference>
<dbReference type="SMR" id="Q8U3E3"/>
<dbReference type="STRING" id="186497.PF0525"/>
<dbReference type="PaxDb" id="186497-PF0525"/>
<dbReference type="KEGG" id="pfu:PF0525"/>
<dbReference type="PATRIC" id="fig|186497.12.peg.549"/>
<dbReference type="eggNOG" id="arCOG02201">
    <property type="taxonomic scope" value="Archaea"/>
</dbReference>
<dbReference type="HOGENOM" id="CLU_024865_0_1_2"/>
<dbReference type="OrthoDB" id="371908at2157"/>
<dbReference type="PhylomeDB" id="Q8U3E3"/>
<dbReference type="Proteomes" id="UP000001013">
    <property type="component" value="Chromosome"/>
</dbReference>
<dbReference type="GO" id="GO:0032153">
    <property type="term" value="C:cell division site"/>
    <property type="evidence" value="ECO:0007669"/>
    <property type="project" value="UniProtKB-UniRule"/>
</dbReference>
<dbReference type="GO" id="GO:0005737">
    <property type="term" value="C:cytoplasm"/>
    <property type="evidence" value="ECO:0007669"/>
    <property type="project" value="UniProtKB-SubCell"/>
</dbReference>
<dbReference type="GO" id="GO:0005525">
    <property type="term" value="F:GTP binding"/>
    <property type="evidence" value="ECO:0007669"/>
    <property type="project" value="UniProtKB-UniRule"/>
</dbReference>
<dbReference type="GO" id="GO:0003924">
    <property type="term" value="F:GTPase activity"/>
    <property type="evidence" value="ECO:0007669"/>
    <property type="project" value="UniProtKB-UniRule"/>
</dbReference>
<dbReference type="GO" id="GO:0043093">
    <property type="term" value="P:FtsZ-dependent cytokinesis"/>
    <property type="evidence" value="ECO:0007669"/>
    <property type="project" value="UniProtKB-UniRule"/>
</dbReference>
<dbReference type="GO" id="GO:0051258">
    <property type="term" value="P:protein polymerization"/>
    <property type="evidence" value="ECO:0007669"/>
    <property type="project" value="UniProtKB-UniRule"/>
</dbReference>
<dbReference type="CDD" id="cd02201">
    <property type="entry name" value="FtsZ_type1"/>
    <property type="match status" value="1"/>
</dbReference>
<dbReference type="FunFam" id="3.40.50.1440:FF:000023">
    <property type="entry name" value="Cell division protein FtsZ"/>
    <property type="match status" value="1"/>
</dbReference>
<dbReference type="Gene3D" id="3.40.50.1440">
    <property type="entry name" value="Tubulin/FtsZ, GTPase domain"/>
    <property type="match status" value="1"/>
</dbReference>
<dbReference type="HAMAP" id="MF_00909">
    <property type="entry name" value="FtsZ"/>
    <property type="match status" value="1"/>
</dbReference>
<dbReference type="InterPro" id="IPR000158">
    <property type="entry name" value="Cell_div_FtsZ"/>
</dbReference>
<dbReference type="InterPro" id="IPR020805">
    <property type="entry name" value="Cell_div_FtsZ_CS"/>
</dbReference>
<dbReference type="InterPro" id="IPR045061">
    <property type="entry name" value="FtsZ/CetZ"/>
</dbReference>
<dbReference type="InterPro" id="IPR024757">
    <property type="entry name" value="FtsZ_C"/>
</dbReference>
<dbReference type="InterPro" id="IPR008280">
    <property type="entry name" value="Tub_FtsZ_C"/>
</dbReference>
<dbReference type="InterPro" id="IPR018316">
    <property type="entry name" value="Tubulin/FtsZ_2-layer-sand-dom"/>
</dbReference>
<dbReference type="InterPro" id="IPR036525">
    <property type="entry name" value="Tubulin/FtsZ_GTPase_sf"/>
</dbReference>
<dbReference type="InterPro" id="IPR003008">
    <property type="entry name" value="Tubulin_FtsZ_GTPase"/>
</dbReference>
<dbReference type="NCBIfam" id="TIGR00065">
    <property type="entry name" value="ftsZ"/>
    <property type="match status" value="1"/>
</dbReference>
<dbReference type="PANTHER" id="PTHR30314:SF9">
    <property type="entry name" value="CELL DIVISION PROTEIN FTSZ 2"/>
    <property type="match status" value="1"/>
</dbReference>
<dbReference type="PANTHER" id="PTHR30314">
    <property type="entry name" value="CELL DIVISION PROTEIN FTSZ-RELATED"/>
    <property type="match status" value="1"/>
</dbReference>
<dbReference type="Pfam" id="PF12327">
    <property type="entry name" value="FtsZ_C"/>
    <property type="match status" value="1"/>
</dbReference>
<dbReference type="Pfam" id="PF00091">
    <property type="entry name" value="Tubulin"/>
    <property type="match status" value="1"/>
</dbReference>
<dbReference type="PRINTS" id="PR00423">
    <property type="entry name" value="CELLDVISFTSZ"/>
</dbReference>
<dbReference type="SMART" id="SM00864">
    <property type="entry name" value="Tubulin"/>
    <property type="match status" value="1"/>
</dbReference>
<dbReference type="SMART" id="SM00865">
    <property type="entry name" value="Tubulin_C"/>
    <property type="match status" value="1"/>
</dbReference>
<dbReference type="SUPFAM" id="SSF55307">
    <property type="entry name" value="Tubulin C-terminal domain-like"/>
    <property type="match status" value="1"/>
</dbReference>
<dbReference type="SUPFAM" id="SSF52490">
    <property type="entry name" value="Tubulin nucleotide-binding domain-like"/>
    <property type="match status" value="1"/>
</dbReference>
<dbReference type="PROSITE" id="PS01134">
    <property type="entry name" value="FTSZ_1"/>
    <property type="match status" value="1"/>
</dbReference>
<dbReference type="PROSITE" id="PS01135">
    <property type="entry name" value="FTSZ_2"/>
    <property type="match status" value="1"/>
</dbReference>
<gene>
    <name evidence="1" type="primary">ftsZ2</name>
    <name type="ordered locus">PF0525</name>
</gene>
<protein>
    <recommendedName>
        <fullName evidence="1">Cell division protein FtsZ 2</fullName>
    </recommendedName>
</protein>
<proteinExistence type="inferred from homology"/>
<reference key="1">
    <citation type="journal article" date="1999" name="Genetics">
        <title>Divergence of the hyperthermophilic archaea Pyrococcus furiosus and P. horikoshii inferred from complete genomic sequences.</title>
        <authorList>
            <person name="Maeder D.L."/>
            <person name="Weiss R.B."/>
            <person name="Dunn D.M."/>
            <person name="Cherry J.L."/>
            <person name="Gonzalez J.M."/>
            <person name="DiRuggiero J."/>
            <person name="Robb F.T."/>
        </authorList>
    </citation>
    <scope>NUCLEOTIDE SEQUENCE [LARGE SCALE GENOMIC DNA]</scope>
    <source>
        <strain>ATCC 43587 / DSM 3638 / JCM 8422 / Vc1</strain>
    </source>
</reference>
<accession>Q8U3E3</accession>
<comment type="function">
    <text evidence="1">Essential cell division protein that forms a contractile ring structure (Z ring) at the future cell division site. The regulation of the ring assembly controls the timing and the location of cell division. One of the functions of the FtsZ ring is to recruit other cell division proteins to the septum to produce a new cell wall between the dividing cells. Binds GTP and shows GTPase activity.</text>
</comment>
<comment type="subunit">
    <text evidence="1">Homodimer. Polymerizes to form a dynamic ring structure in a strictly GTP-dependent manner. Interacts directly with several other division proteins.</text>
</comment>
<comment type="subcellular location">
    <subcellularLocation>
        <location evidence="1">Cytoplasm</location>
    </subcellularLocation>
    <text evidence="1">Assembles at midcell at the inner surface of the cytoplasmic membrane.</text>
</comment>
<comment type="similarity">
    <text evidence="1">Belongs to the FtsZ family.</text>
</comment>
<evidence type="ECO:0000255" key="1">
    <source>
        <dbReference type="HAMAP-Rule" id="MF_00909"/>
    </source>
</evidence>
<name>FTSZ2_PYRFU</name>
<sequence>MLEKLLEQAGIKLDFDGEEEKKSEIVDEFSGYKINIAVVGVGGSGNNTISRLYDLGVQGADLIAMNTDAQHLAITKAHKKVLLGKHITQGKGSGGDPKVGYLAAEASAQEIAAAVDGYDLVFITAGMGNGTGTGAAPVVARIVKETARNNGRFQEPLVVSVVTFPFKTEGTVRIEKAKWGIQRLLEYSDTVIIIQNDKLLELVPKLPLQSAFRFADELIARMVKGIVETIKLNSIVNIDFADVYSIMKGGGPALIGIGESDSNNRAVDAVNNALTNKMLDVEFGSGEKALVHFTIGPDVSLEEINKAMEVVYEKLSEKSEIKWGAMVDPEMGKTVRAMVIMTGVRSPYILGNVNALTDSSSWVVPKDRRLIGDPRIEKMFPDFNGSRAGRKRPSVGDAILKELGFKEL</sequence>
<keyword id="KW-0131">Cell cycle</keyword>
<keyword id="KW-0132">Cell division</keyword>
<keyword id="KW-0963">Cytoplasm</keyword>
<keyword id="KW-0342">GTP-binding</keyword>
<keyword id="KW-0547">Nucleotide-binding</keyword>
<keyword id="KW-1185">Reference proteome</keyword>
<keyword id="KW-0717">Septation</keyword>
<feature type="chain" id="PRO_0000114410" description="Cell division protein FtsZ 2">
    <location>
        <begin position="1"/>
        <end position="408"/>
    </location>
</feature>
<feature type="binding site" evidence="1">
    <location>
        <begin position="130"/>
        <end position="132"/>
    </location>
    <ligand>
        <name>GTP</name>
        <dbReference type="ChEBI" id="CHEBI:37565"/>
    </ligand>
</feature>
<feature type="binding site" evidence="1">
    <location>
        <position position="169"/>
    </location>
    <ligand>
        <name>GTP</name>
        <dbReference type="ChEBI" id="CHEBI:37565"/>
    </ligand>
</feature>
<feature type="binding site" evidence="1">
    <location>
        <position position="173"/>
    </location>
    <ligand>
        <name>GTP</name>
        <dbReference type="ChEBI" id="CHEBI:37565"/>
    </ligand>
</feature>
<feature type="binding site" evidence="1">
    <location>
        <position position="216"/>
    </location>
    <ligand>
        <name>GTP</name>
        <dbReference type="ChEBI" id="CHEBI:37565"/>
    </ligand>
</feature>
<organism>
    <name type="scientific">Pyrococcus furiosus (strain ATCC 43587 / DSM 3638 / JCM 8422 / Vc1)</name>
    <dbReference type="NCBI Taxonomy" id="186497"/>
    <lineage>
        <taxon>Archaea</taxon>
        <taxon>Methanobacteriati</taxon>
        <taxon>Methanobacteriota</taxon>
        <taxon>Thermococci</taxon>
        <taxon>Thermococcales</taxon>
        <taxon>Thermococcaceae</taxon>
        <taxon>Pyrococcus</taxon>
    </lineage>
</organism>